<keyword id="KW-0378">Hydrolase</keyword>
<name>RUTD_SHIF8</name>
<proteinExistence type="inferred from homology"/>
<gene>
    <name evidence="1" type="primary">rutD</name>
    <name type="ordered locus">SFV_1021</name>
</gene>
<evidence type="ECO:0000255" key="1">
    <source>
        <dbReference type="HAMAP-Rule" id="MF_00832"/>
    </source>
</evidence>
<feature type="chain" id="PRO_0000402983" description="Putative carbamate hydrolase RutD">
    <location>
        <begin position="1"/>
        <end position="266"/>
    </location>
</feature>
<feature type="domain" description="AB hydrolase-1" evidence="1">
    <location>
        <begin position="14"/>
        <end position="115"/>
    </location>
</feature>
<comment type="function">
    <text evidence="1">Involved in pyrimidine catabolism. May facilitate the hydrolysis of carbamate, a reaction that can also occur spontaneously.</text>
</comment>
<comment type="catalytic activity">
    <reaction evidence="1">
        <text>carbamate + 2 H(+) = NH4(+) + CO2</text>
        <dbReference type="Rhea" id="RHEA:15649"/>
        <dbReference type="ChEBI" id="CHEBI:13941"/>
        <dbReference type="ChEBI" id="CHEBI:15378"/>
        <dbReference type="ChEBI" id="CHEBI:16526"/>
        <dbReference type="ChEBI" id="CHEBI:28938"/>
    </reaction>
</comment>
<comment type="similarity">
    <text evidence="1">Belongs to the AB hydrolase superfamily. Hydrolase RutD family.</text>
</comment>
<protein>
    <recommendedName>
        <fullName evidence="1">Putative carbamate hydrolase RutD</fullName>
        <ecNumber evidence="1">3.5.1.-</ecNumber>
    </recommendedName>
    <alternativeName>
        <fullName evidence="1">Aminohydrolase</fullName>
    </alternativeName>
</protein>
<dbReference type="EC" id="3.5.1.-" evidence="1"/>
<dbReference type="EMBL" id="CP000266">
    <property type="protein sequence ID" value="ABF03240.1"/>
    <property type="molecule type" value="Genomic_DNA"/>
</dbReference>
<dbReference type="RefSeq" id="WP_000777663.1">
    <property type="nucleotide sequence ID" value="NC_008258.1"/>
</dbReference>
<dbReference type="SMR" id="Q0T625"/>
<dbReference type="ESTHER" id="shifl-YCDJ">
    <property type="family name" value="RutD"/>
</dbReference>
<dbReference type="KEGG" id="sfv:SFV_1021"/>
<dbReference type="HOGENOM" id="CLU_020336_50_1_6"/>
<dbReference type="Proteomes" id="UP000000659">
    <property type="component" value="Chromosome"/>
</dbReference>
<dbReference type="GO" id="GO:0016020">
    <property type="term" value="C:membrane"/>
    <property type="evidence" value="ECO:0007669"/>
    <property type="project" value="TreeGrafter"/>
</dbReference>
<dbReference type="GO" id="GO:0016811">
    <property type="term" value="F:hydrolase activity, acting on carbon-nitrogen (but not peptide) bonds, in linear amides"/>
    <property type="evidence" value="ECO:0007669"/>
    <property type="project" value="InterPro"/>
</dbReference>
<dbReference type="GO" id="GO:0019740">
    <property type="term" value="P:nitrogen utilization"/>
    <property type="evidence" value="ECO:0007669"/>
    <property type="project" value="UniProtKB-UniRule"/>
</dbReference>
<dbReference type="GO" id="GO:0006212">
    <property type="term" value="P:uracil catabolic process"/>
    <property type="evidence" value="ECO:0007669"/>
    <property type="project" value="UniProtKB-UniRule"/>
</dbReference>
<dbReference type="FunFam" id="3.40.50.1820:FF:000052">
    <property type="entry name" value="Putative aminoacrylate hydrolase RutD"/>
    <property type="match status" value="1"/>
</dbReference>
<dbReference type="Gene3D" id="3.40.50.1820">
    <property type="entry name" value="alpha/beta hydrolase"/>
    <property type="match status" value="1"/>
</dbReference>
<dbReference type="HAMAP" id="MF_00832">
    <property type="entry name" value="RutD"/>
    <property type="match status" value="1"/>
</dbReference>
<dbReference type="InterPro" id="IPR000073">
    <property type="entry name" value="AB_hydrolase_1"/>
</dbReference>
<dbReference type="InterPro" id="IPR029058">
    <property type="entry name" value="AB_hydrolase_fold"/>
</dbReference>
<dbReference type="InterPro" id="IPR050266">
    <property type="entry name" value="AB_hydrolase_sf"/>
</dbReference>
<dbReference type="InterPro" id="IPR019913">
    <property type="entry name" value="Pyrimidine_utilisation_RutD"/>
</dbReference>
<dbReference type="NCBIfam" id="TIGR03611">
    <property type="entry name" value="RutD"/>
    <property type="match status" value="1"/>
</dbReference>
<dbReference type="PANTHER" id="PTHR43798:SF33">
    <property type="entry name" value="HYDROLASE, PUTATIVE (AFU_ORTHOLOGUE AFUA_2G14860)-RELATED"/>
    <property type="match status" value="1"/>
</dbReference>
<dbReference type="PANTHER" id="PTHR43798">
    <property type="entry name" value="MONOACYLGLYCEROL LIPASE"/>
    <property type="match status" value="1"/>
</dbReference>
<dbReference type="Pfam" id="PF00561">
    <property type="entry name" value="Abhydrolase_1"/>
    <property type="match status" value="1"/>
</dbReference>
<dbReference type="PRINTS" id="PR00111">
    <property type="entry name" value="ABHYDROLASE"/>
</dbReference>
<dbReference type="SUPFAM" id="SSF53474">
    <property type="entry name" value="alpha/beta-Hydrolases"/>
    <property type="match status" value="1"/>
</dbReference>
<accession>Q0T625</accession>
<reference key="1">
    <citation type="journal article" date="2006" name="BMC Genomics">
        <title>Complete genome sequence of Shigella flexneri 5b and comparison with Shigella flexneri 2a.</title>
        <authorList>
            <person name="Nie H."/>
            <person name="Yang F."/>
            <person name="Zhang X."/>
            <person name="Yang J."/>
            <person name="Chen L."/>
            <person name="Wang J."/>
            <person name="Xiong Z."/>
            <person name="Peng J."/>
            <person name="Sun L."/>
            <person name="Dong J."/>
            <person name="Xue Y."/>
            <person name="Xu X."/>
            <person name="Chen S."/>
            <person name="Yao Z."/>
            <person name="Shen Y."/>
            <person name="Jin Q."/>
        </authorList>
    </citation>
    <scope>NUCLEOTIDE SEQUENCE [LARGE SCALE GENOMIC DNA]</scope>
    <source>
        <strain>8401</strain>
    </source>
</reference>
<sequence>MKLSLSSPPYADAPVVVLISGLGGSGSYWLPQLAVLEQEYQVVCYDQRGTGNNPDTLAEDYSIAQMAAELHQALVAAGIERYAVVGHALGALVGMQLALDYPASVTMLVSVNGWLRINAHTRRCFQVRERLLYSGGAQAWVEAQPLFLYPADWMAARAPRLEAEDALALAHFQGKNNLLRRLNALKRADFSHHADRIRRPVQIICASDDLLVPTACSSELHAALPDSQKMVMPYGGHACNVTDPETFNALLLNGLASLLHHREAAL</sequence>
<organism>
    <name type="scientific">Shigella flexneri serotype 5b (strain 8401)</name>
    <dbReference type="NCBI Taxonomy" id="373384"/>
    <lineage>
        <taxon>Bacteria</taxon>
        <taxon>Pseudomonadati</taxon>
        <taxon>Pseudomonadota</taxon>
        <taxon>Gammaproteobacteria</taxon>
        <taxon>Enterobacterales</taxon>
        <taxon>Enterobacteriaceae</taxon>
        <taxon>Shigella</taxon>
    </lineage>
</organism>